<reference key="1">
    <citation type="journal article" date="2002" name="Proc. Natl. Acad. Sci. U.S.A.">
        <title>Extensive mosaic structure revealed by the complete genome sequence of uropathogenic Escherichia coli.</title>
        <authorList>
            <person name="Welch R.A."/>
            <person name="Burland V."/>
            <person name="Plunkett G. III"/>
            <person name="Redford P."/>
            <person name="Roesch P."/>
            <person name="Rasko D."/>
            <person name="Buckles E.L."/>
            <person name="Liou S.-R."/>
            <person name="Boutin A."/>
            <person name="Hackett J."/>
            <person name="Stroud D."/>
            <person name="Mayhew G.F."/>
            <person name="Rose D.J."/>
            <person name="Zhou S."/>
            <person name="Schwartz D.C."/>
            <person name="Perna N.T."/>
            <person name="Mobley H.L.T."/>
            <person name="Donnenberg M.S."/>
            <person name="Blattner F.R."/>
        </authorList>
    </citation>
    <scope>NUCLEOTIDE SEQUENCE [LARGE SCALE GENOMIC DNA]</scope>
    <source>
        <strain>CFT073 / ATCC 700928 / UPEC</strain>
    </source>
</reference>
<comment type="function">
    <text evidence="1">Catalyzes the transfer of the L-Ara4N moiety of the glycolipid undecaprenyl phosphate-alpha-L-Ara4N to lipid A. The modified arabinose is attached to lipid A and is required for resistance to polymyxin and cationic antimicrobial peptides.</text>
</comment>
<comment type="catalytic activity">
    <reaction evidence="1">
        <text>4-amino-4-deoxy-alpha-L-arabinopyranosyl di-trans,octa-cis-undecaprenyl phosphate + lipid IVA = lipid IIA + di-trans,octa-cis-undecaprenyl phosphate.</text>
        <dbReference type="EC" id="2.4.2.43"/>
    </reaction>
</comment>
<comment type="pathway">
    <text evidence="1">Lipopolysaccharide metabolism; 4-amino-4-deoxy-beta-L-arabinose-lipid A biosynthesis.</text>
</comment>
<comment type="subcellular location">
    <subcellularLocation>
        <location evidence="1">Cell inner membrane</location>
        <topology evidence="1">Multi-pass membrane protein</topology>
    </subcellularLocation>
</comment>
<comment type="similarity">
    <text evidence="1">Belongs to the glycosyltransferase 83 family.</text>
</comment>
<evidence type="ECO:0000255" key="1">
    <source>
        <dbReference type="HAMAP-Rule" id="MF_01165"/>
    </source>
</evidence>
<keyword id="KW-0997">Cell inner membrane</keyword>
<keyword id="KW-1003">Cell membrane</keyword>
<keyword id="KW-0328">Glycosyltransferase</keyword>
<keyword id="KW-0441">Lipid A biosynthesis</keyword>
<keyword id="KW-0444">Lipid biosynthesis</keyword>
<keyword id="KW-0443">Lipid metabolism</keyword>
<keyword id="KW-0448">Lipopolysaccharide biosynthesis</keyword>
<keyword id="KW-0472">Membrane</keyword>
<keyword id="KW-1185">Reference proteome</keyword>
<keyword id="KW-0808">Transferase</keyword>
<keyword id="KW-0812">Transmembrane</keyword>
<keyword id="KW-1133">Transmembrane helix</keyword>
<feature type="chain" id="PRO_0000121506" description="Undecaprenyl phosphate-alpha-4-amino-4-deoxy-L-arabinose arabinosyl transferase">
    <location>
        <begin position="1"/>
        <end position="550"/>
    </location>
</feature>
<feature type="transmembrane region" description="Helical" evidence="1">
    <location>
        <begin position="7"/>
        <end position="27"/>
    </location>
</feature>
<feature type="transmembrane region" description="Helical" evidence="1">
    <location>
        <begin position="81"/>
        <end position="101"/>
    </location>
</feature>
<feature type="transmembrane region" description="Helical" evidence="1">
    <location>
        <begin position="111"/>
        <end position="133"/>
    </location>
</feature>
<feature type="transmembrane region" description="Helical" evidence="1">
    <location>
        <begin position="137"/>
        <end position="154"/>
    </location>
</feature>
<feature type="transmembrane region" description="Helical" evidence="1">
    <location>
        <begin position="165"/>
        <end position="185"/>
    </location>
</feature>
<feature type="transmembrane region" description="Helical" evidence="1">
    <location>
        <begin position="204"/>
        <end position="224"/>
    </location>
</feature>
<feature type="transmembrane region" description="Helical" evidence="1">
    <location>
        <begin position="263"/>
        <end position="283"/>
    </location>
</feature>
<feature type="transmembrane region" description="Helical" evidence="1">
    <location>
        <begin position="288"/>
        <end position="308"/>
    </location>
</feature>
<feature type="transmembrane region" description="Helical" evidence="1">
    <location>
        <begin position="315"/>
        <end position="335"/>
    </location>
</feature>
<feature type="transmembrane region" description="Helical" evidence="1">
    <location>
        <begin position="346"/>
        <end position="366"/>
    </location>
</feature>
<feature type="transmembrane region" description="Helical" evidence="1">
    <location>
        <begin position="382"/>
        <end position="402"/>
    </location>
</feature>
<feature type="transmembrane region" description="Helical" evidence="1">
    <location>
        <begin position="406"/>
        <end position="426"/>
    </location>
</feature>
<dbReference type="EC" id="2.4.2.43" evidence="1"/>
<dbReference type="EMBL" id="AE014075">
    <property type="protein sequence ID" value="AAN81253.1"/>
    <property type="molecule type" value="Genomic_DNA"/>
</dbReference>
<dbReference type="RefSeq" id="WP_000844038.1">
    <property type="nucleotide sequence ID" value="NZ_CP051263.1"/>
</dbReference>
<dbReference type="SMR" id="Q8FFL9"/>
<dbReference type="STRING" id="199310.c2799"/>
<dbReference type="CAZy" id="GT83">
    <property type="family name" value="Glycosyltransferase Family 83"/>
</dbReference>
<dbReference type="KEGG" id="ecc:c2799"/>
<dbReference type="eggNOG" id="COG1807">
    <property type="taxonomic scope" value="Bacteria"/>
</dbReference>
<dbReference type="HOGENOM" id="CLU_019200_2_1_6"/>
<dbReference type="BioCyc" id="ECOL199310:C2799-MONOMER"/>
<dbReference type="UniPathway" id="UPA00037"/>
<dbReference type="Proteomes" id="UP000001410">
    <property type="component" value="Chromosome"/>
</dbReference>
<dbReference type="GO" id="GO:0005886">
    <property type="term" value="C:plasma membrane"/>
    <property type="evidence" value="ECO:0007669"/>
    <property type="project" value="UniProtKB-SubCell"/>
</dbReference>
<dbReference type="GO" id="GO:0103015">
    <property type="term" value="F:4-amino-4-deoxy-L-arabinose transferase activity"/>
    <property type="evidence" value="ECO:0007669"/>
    <property type="project" value="UniProtKB-EC"/>
</dbReference>
<dbReference type="GO" id="GO:0000030">
    <property type="term" value="F:mannosyltransferase activity"/>
    <property type="evidence" value="ECO:0007669"/>
    <property type="project" value="InterPro"/>
</dbReference>
<dbReference type="GO" id="GO:0009245">
    <property type="term" value="P:lipid A biosynthetic process"/>
    <property type="evidence" value="ECO:0007669"/>
    <property type="project" value="UniProtKB-UniRule"/>
</dbReference>
<dbReference type="GO" id="GO:0009103">
    <property type="term" value="P:lipopolysaccharide biosynthetic process"/>
    <property type="evidence" value="ECO:0007669"/>
    <property type="project" value="UniProtKB-KW"/>
</dbReference>
<dbReference type="GO" id="GO:0006493">
    <property type="term" value="P:protein O-linked glycosylation"/>
    <property type="evidence" value="ECO:0007669"/>
    <property type="project" value="InterPro"/>
</dbReference>
<dbReference type="GO" id="GO:0010041">
    <property type="term" value="P:response to iron(III) ion"/>
    <property type="evidence" value="ECO:0007669"/>
    <property type="project" value="TreeGrafter"/>
</dbReference>
<dbReference type="HAMAP" id="MF_01165">
    <property type="entry name" value="ArnT_transfer"/>
    <property type="match status" value="1"/>
</dbReference>
<dbReference type="InterPro" id="IPR022839">
    <property type="entry name" value="ArnT_tfrase"/>
</dbReference>
<dbReference type="InterPro" id="IPR003342">
    <property type="entry name" value="Glyco_trans_39/83"/>
</dbReference>
<dbReference type="InterPro" id="IPR050297">
    <property type="entry name" value="LipidA_mod_glycosyltrf_83"/>
</dbReference>
<dbReference type="NCBIfam" id="NF009784">
    <property type="entry name" value="PRK13279.1"/>
    <property type="match status" value="1"/>
</dbReference>
<dbReference type="PANTHER" id="PTHR33908">
    <property type="entry name" value="MANNOSYLTRANSFERASE YKCB-RELATED"/>
    <property type="match status" value="1"/>
</dbReference>
<dbReference type="PANTHER" id="PTHR33908:SF3">
    <property type="entry name" value="UNDECAPRENYL PHOSPHATE-ALPHA-4-AMINO-4-DEOXY-L-ARABINOSE ARABINOSYL TRANSFERASE"/>
    <property type="match status" value="1"/>
</dbReference>
<dbReference type="Pfam" id="PF02366">
    <property type="entry name" value="PMT"/>
    <property type="match status" value="1"/>
</dbReference>
<protein>
    <recommendedName>
        <fullName evidence="1">Undecaprenyl phosphate-alpha-4-amino-4-deoxy-L-arabinose arabinosyl transferase</fullName>
        <ecNumber evidence="1">2.4.2.43</ecNumber>
    </recommendedName>
    <alternativeName>
        <fullName evidence="1">4-amino-4-deoxy-L-arabinose lipid A transferase</fullName>
    </alternativeName>
    <alternativeName>
        <fullName evidence="1">Lipid IV(A) 4-amino-4-deoxy-L-arabinosyltransferase</fullName>
    </alternativeName>
    <alternativeName>
        <fullName evidence="1">Undecaprenyl phosphate-alpha-L-Ara4N transferase</fullName>
    </alternativeName>
</protein>
<proteinExistence type="inferred from homology"/>
<organism>
    <name type="scientific">Escherichia coli O6:H1 (strain CFT073 / ATCC 700928 / UPEC)</name>
    <dbReference type="NCBI Taxonomy" id="199310"/>
    <lineage>
        <taxon>Bacteria</taxon>
        <taxon>Pseudomonadati</taxon>
        <taxon>Pseudomonadota</taxon>
        <taxon>Gammaproteobacteria</taxon>
        <taxon>Enterobacterales</taxon>
        <taxon>Enterobacteriaceae</taxon>
        <taxon>Escherichia</taxon>
    </lineage>
</organism>
<accession>Q8FFL9</accession>
<sequence>MKSVRYLIGLFAFIACYYLLPISTRLLWQPDETRYAEISREMLASGDWIVPHLLGLRYFEKPIAGYWINSIGQWLFGANNFGVRAGVIFATLLTAALVTWFTLRLWRDKRLALLATVIYLSLFIVYAIGTYAVLDPFIAFWLVAGMCSFWLAMQAQTWKGKSAGFLLLGITCGMGVMTKGFLALAVPVLSVLPWVATQKRWKDLFIYGWLAVISCVLTVLPWGLAIAQREPDFWHYFFWVEHIQRFALDDAQHRAPFWYYLPVVIAGSLPWLGLLPGALYAGWKNRKHSATVYLLSWTIMPLLFFSVAKGKLPTYILSCFAPLAMLMAHYALLAAKNNPLALRINGWINIAFGVTGIIATFVVSPWGPMNTPVWQTFESYKVFCAWSIFSLWAFFGWYTLTNVEKTWPFAALCPLGLALLVGFSIPDRVMEGKHPQFFVEMTQESLQPSRYILTDSVGVAAGLAWSLQRDDIIMYRQTGELKYGLNYPDAKGRFVSGDEFANWLNQHRQEGIITLVLSVDRDEDINSLAIPPADVIDRQERLVLIQYRPK</sequence>
<gene>
    <name evidence="1" type="primary">arnT</name>
    <name type="ordered locus">c2799</name>
</gene>
<name>ARNT_ECOL6</name>